<organism>
    <name type="scientific">Streptococcus sanguinis (strain SK36)</name>
    <dbReference type="NCBI Taxonomy" id="388919"/>
    <lineage>
        <taxon>Bacteria</taxon>
        <taxon>Bacillati</taxon>
        <taxon>Bacillota</taxon>
        <taxon>Bacilli</taxon>
        <taxon>Lactobacillales</taxon>
        <taxon>Streptococcaceae</taxon>
        <taxon>Streptococcus</taxon>
    </lineage>
</organism>
<proteinExistence type="inferred from homology"/>
<evidence type="ECO:0000255" key="1">
    <source>
        <dbReference type="HAMAP-Rule" id="MF_00145"/>
    </source>
</evidence>
<gene>
    <name evidence="1" type="primary">pgk</name>
    <name type="ordered locus">SSA_0302</name>
</gene>
<accession>A3CKQ4</accession>
<name>PGK_STRSV</name>
<protein>
    <recommendedName>
        <fullName evidence="1">Phosphoglycerate kinase</fullName>
        <ecNumber evidence="1">2.7.2.3</ecNumber>
    </recommendedName>
</protein>
<keyword id="KW-0067">ATP-binding</keyword>
<keyword id="KW-0963">Cytoplasm</keyword>
<keyword id="KW-0324">Glycolysis</keyword>
<keyword id="KW-0418">Kinase</keyword>
<keyword id="KW-0547">Nucleotide-binding</keyword>
<keyword id="KW-1185">Reference proteome</keyword>
<keyword id="KW-0808">Transferase</keyword>
<comment type="catalytic activity">
    <reaction evidence="1">
        <text>(2R)-3-phosphoglycerate + ATP = (2R)-3-phospho-glyceroyl phosphate + ADP</text>
        <dbReference type="Rhea" id="RHEA:14801"/>
        <dbReference type="ChEBI" id="CHEBI:30616"/>
        <dbReference type="ChEBI" id="CHEBI:57604"/>
        <dbReference type="ChEBI" id="CHEBI:58272"/>
        <dbReference type="ChEBI" id="CHEBI:456216"/>
        <dbReference type="EC" id="2.7.2.3"/>
    </reaction>
</comment>
<comment type="pathway">
    <text evidence="1">Carbohydrate degradation; glycolysis; pyruvate from D-glyceraldehyde 3-phosphate: step 2/5.</text>
</comment>
<comment type="subunit">
    <text evidence="1">Monomer.</text>
</comment>
<comment type="subcellular location">
    <subcellularLocation>
        <location evidence="1">Cytoplasm</location>
    </subcellularLocation>
</comment>
<comment type="similarity">
    <text evidence="1">Belongs to the phosphoglycerate kinase family.</text>
</comment>
<sequence length="398" mass="41963">MAKLTVKDVDLKGKKVLVRVDFNVPLKDGVITNDNRITAALPTIKYIIEQGGRAILFSHLGRVKEEADKEGKSLAPVAADLAAKLGQDVVFPGVTRGAELEAAINALEDGQVLLVENTRFEDVDGKKESKNDPELGKYWASLGDGIFVNDAFGTAHRAHASNVGISGNVEKAVAGFLLENEIAYIQEAVETPERPFVAILGGSKVSDKIGVIENLLEKADKVLIGGGMTYTFYKAQGIEIGNSLVEEDKLDVAKALLEKANGKLVLPVDSKEANAFADYTEVKDTEGEAVDPGFLGLDIGPKSIAKFDEALTGAKTVVWNGPMGVFENPDFQAGTIGVMDAIVKQPGVKSIIGGGDSAAAAINLGRADKFSWISTGGGASMELLEGKVLPGLAALTEK</sequence>
<reference key="1">
    <citation type="journal article" date="2007" name="J. Bacteriol.">
        <title>Genome of the opportunistic pathogen Streptococcus sanguinis.</title>
        <authorList>
            <person name="Xu P."/>
            <person name="Alves J.M."/>
            <person name="Kitten T."/>
            <person name="Brown A."/>
            <person name="Chen Z."/>
            <person name="Ozaki L.S."/>
            <person name="Manque P."/>
            <person name="Ge X."/>
            <person name="Serrano M.G."/>
            <person name="Puiu D."/>
            <person name="Hendricks S."/>
            <person name="Wang Y."/>
            <person name="Chaplin M.D."/>
            <person name="Akan D."/>
            <person name="Paik S."/>
            <person name="Peterson D.L."/>
            <person name="Macrina F.L."/>
            <person name="Buck G.A."/>
        </authorList>
    </citation>
    <scope>NUCLEOTIDE SEQUENCE [LARGE SCALE GENOMIC DNA]</scope>
    <source>
        <strain>SK36</strain>
    </source>
</reference>
<feature type="chain" id="PRO_1000009661" description="Phosphoglycerate kinase">
    <location>
        <begin position="1"/>
        <end position="398"/>
    </location>
</feature>
<feature type="binding site" evidence="1">
    <location>
        <begin position="21"/>
        <end position="23"/>
    </location>
    <ligand>
        <name>substrate</name>
    </ligand>
</feature>
<feature type="binding site" evidence="1">
    <location>
        <position position="36"/>
    </location>
    <ligand>
        <name>substrate</name>
    </ligand>
</feature>
<feature type="binding site" evidence="1">
    <location>
        <begin position="59"/>
        <end position="62"/>
    </location>
    <ligand>
        <name>substrate</name>
    </ligand>
</feature>
<feature type="binding site" evidence="1">
    <location>
        <position position="119"/>
    </location>
    <ligand>
        <name>substrate</name>
    </ligand>
</feature>
<feature type="binding site" evidence="1">
    <location>
        <position position="157"/>
    </location>
    <ligand>
        <name>substrate</name>
    </ligand>
</feature>
<feature type="binding site" evidence="1">
    <location>
        <position position="208"/>
    </location>
    <ligand>
        <name>ATP</name>
        <dbReference type="ChEBI" id="CHEBI:30616"/>
    </ligand>
</feature>
<feature type="binding site" evidence="1">
    <location>
        <position position="296"/>
    </location>
    <ligand>
        <name>ATP</name>
        <dbReference type="ChEBI" id="CHEBI:30616"/>
    </ligand>
</feature>
<feature type="binding site" evidence="1">
    <location>
        <position position="327"/>
    </location>
    <ligand>
        <name>ATP</name>
        <dbReference type="ChEBI" id="CHEBI:30616"/>
    </ligand>
</feature>
<feature type="binding site" evidence="1">
    <location>
        <begin position="354"/>
        <end position="357"/>
    </location>
    <ligand>
        <name>ATP</name>
        <dbReference type="ChEBI" id="CHEBI:30616"/>
    </ligand>
</feature>
<dbReference type="EC" id="2.7.2.3" evidence="1"/>
<dbReference type="EMBL" id="CP000387">
    <property type="protein sequence ID" value="ABN43759.1"/>
    <property type="molecule type" value="Genomic_DNA"/>
</dbReference>
<dbReference type="RefSeq" id="WP_002896645.1">
    <property type="nucleotide sequence ID" value="NC_009009.1"/>
</dbReference>
<dbReference type="RefSeq" id="YP_001034309.1">
    <property type="nucleotide sequence ID" value="NC_009009.1"/>
</dbReference>
<dbReference type="SMR" id="A3CKQ4"/>
<dbReference type="STRING" id="388919.SSA_0302"/>
<dbReference type="KEGG" id="ssa:SSA_0302"/>
<dbReference type="PATRIC" id="fig|388919.9.peg.292"/>
<dbReference type="eggNOG" id="COG0126">
    <property type="taxonomic scope" value="Bacteria"/>
</dbReference>
<dbReference type="HOGENOM" id="CLU_025427_0_1_9"/>
<dbReference type="OrthoDB" id="9808460at2"/>
<dbReference type="UniPathway" id="UPA00109">
    <property type="reaction ID" value="UER00185"/>
</dbReference>
<dbReference type="Proteomes" id="UP000002148">
    <property type="component" value="Chromosome"/>
</dbReference>
<dbReference type="GO" id="GO:0005829">
    <property type="term" value="C:cytosol"/>
    <property type="evidence" value="ECO:0007669"/>
    <property type="project" value="TreeGrafter"/>
</dbReference>
<dbReference type="GO" id="GO:0043531">
    <property type="term" value="F:ADP binding"/>
    <property type="evidence" value="ECO:0007669"/>
    <property type="project" value="TreeGrafter"/>
</dbReference>
<dbReference type="GO" id="GO:0005524">
    <property type="term" value="F:ATP binding"/>
    <property type="evidence" value="ECO:0007669"/>
    <property type="project" value="UniProtKB-KW"/>
</dbReference>
<dbReference type="GO" id="GO:0004618">
    <property type="term" value="F:phosphoglycerate kinase activity"/>
    <property type="evidence" value="ECO:0007669"/>
    <property type="project" value="UniProtKB-UniRule"/>
</dbReference>
<dbReference type="GO" id="GO:0006094">
    <property type="term" value="P:gluconeogenesis"/>
    <property type="evidence" value="ECO:0007669"/>
    <property type="project" value="TreeGrafter"/>
</dbReference>
<dbReference type="GO" id="GO:0006096">
    <property type="term" value="P:glycolytic process"/>
    <property type="evidence" value="ECO:0007669"/>
    <property type="project" value="UniProtKB-UniRule"/>
</dbReference>
<dbReference type="FunFam" id="3.40.50.1260:FF:000001">
    <property type="entry name" value="Phosphoglycerate kinase"/>
    <property type="match status" value="1"/>
</dbReference>
<dbReference type="FunFam" id="3.40.50.1260:FF:000008">
    <property type="entry name" value="Phosphoglycerate kinase"/>
    <property type="match status" value="1"/>
</dbReference>
<dbReference type="Gene3D" id="3.40.50.1260">
    <property type="entry name" value="Phosphoglycerate kinase, N-terminal domain"/>
    <property type="match status" value="2"/>
</dbReference>
<dbReference type="HAMAP" id="MF_00145">
    <property type="entry name" value="Phosphoglyc_kinase"/>
    <property type="match status" value="1"/>
</dbReference>
<dbReference type="InterPro" id="IPR001576">
    <property type="entry name" value="Phosphoglycerate_kinase"/>
</dbReference>
<dbReference type="InterPro" id="IPR015911">
    <property type="entry name" value="Phosphoglycerate_kinase_CS"/>
</dbReference>
<dbReference type="InterPro" id="IPR015824">
    <property type="entry name" value="Phosphoglycerate_kinase_N"/>
</dbReference>
<dbReference type="InterPro" id="IPR036043">
    <property type="entry name" value="Phosphoglycerate_kinase_sf"/>
</dbReference>
<dbReference type="PANTHER" id="PTHR11406">
    <property type="entry name" value="PHOSPHOGLYCERATE KINASE"/>
    <property type="match status" value="1"/>
</dbReference>
<dbReference type="PANTHER" id="PTHR11406:SF23">
    <property type="entry name" value="PHOSPHOGLYCERATE KINASE 1, CHLOROPLASTIC-RELATED"/>
    <property type="match status" value="1"/>
</dbReference>
<dbReference type="Pfam" id="PF00162">
    <property type="entry name" value="PGK"/>
    <property type="match status" value="1"/>
</dbReference>
<dbReference type="PIRSF" id="PIRSF000724">
    <property type="entry name" value="Pgk"/>
    <property type="match status" value="1"/>
</dbReference>
<dbReference type="PRINTS" id="PR00477">
    <property type="entry name" value="PHGLYCKINASE"/>
</dbReference>
<dbReference type="SUPFAM" id="SSF53748">
    <property type="entry name" value="Phosphoglycerate kinase"/>
    <property type="match status" value="1"/>
</dbReference>
<dbReference type="PROSITE" id="PS00111">
    <property type="entry name" value="PGLYCERATE_KINASE"/>
    <property type="match status" value="1"/>
</dbReference>